<reference key="1">
    <citation type="journal article" date="2001" name="Proc. Natl. Acad. Sci. U.S.A.">
        <title>The complete genome of the crenarchaeon Sulfolobus solfataricus P2.</title>
        <authorList>
            <person name="She Q."/>
            <person name="Singh R.K."/>
            <person name="Confalonieri F."/>
            <person name="Zivanovic Y."/>
            <person name="Allard G."/>
            <person name="Awayez M.J."/>
            <person name="Chan-Weiher C.C.-Y."/>
            <person name="Clausen I.G."/>
            <person name="Curtis B.A."/>
            <person name="De Moors A."/>
            <person name="Erauso G."/>
            <person name="Fletcher C."/>
            <person name="Gordon P.M.K."/>
            <person name="Heikamp-de Jong I."/>
            <person name="Jeffries A.C."/>
            <person name="Kozera C.J."/>
            <person name="Medina N."/>
            <person name="Peng X."/>
            <person name="Thi-Ngoc H.P."/>
            <person name="Redder P."/>
            <person name="Schenk M.E."/>
            <person name="Theriault C."/>
            <person name="Tolstrup N."/>
            <person name="Charlebois R.L."/>
            <person name="Doolittle W.F."/>
            <person name="Duguet M."/>
            <person name="Gaasterland T."/>
            <person name="Garrett R.A."/>
            <person name="Ragan M.A."/>
            <person name="Sensen C.W."/>
            <person name="Van der Oost J."/>
        </authorList>
    </citation>
    <scope>NUCLEOTIDE SEQUENCE [LARGE SCALE GENOMIC DNA]</scope>
    <source>
        <strain>ATCC 35092 / DSM 1617 / JCM 11322 / P2</strain>
    </source>
</reference>
<reference key="2">
    <citation type="journal article" date="2011" name="J. Biol. Chem.">
        <title>Structural and functional characterization of an archaeal clustered regularly interspaced short palindromic repeat (CRISPR)-associated complex for antiviral defense (CASCADE).</title>
        <authorList>
            <person name="Lintner N.G."/>
            <person name="Kerou M."/>
            <person name="Brumfield S.K."/>
            <person name="Graham S."/>
            <person name="Liu H."/>
            <person name="Naismith J.H."/>
            <person name="Sdano M."/>
            <person name="Peng N."/>
            <person name="She Q."/>
            <person name="Copie V."/>
            <person name="Young M.J."/>
            <person name="White M.F."/>
            <person name="Lawrence C.M."/>
        </authorList>
    </citation>
    <scope>X-RAY CRYSTALLOGRAPHY (2.00 ANGSTROMS)</scope>
    <scope>SUBUNIT</scope>
    <scope>RNA-BINDING</scope>
    <scope>INTERACTION WITH CAS5E</scope>
    <scope>MUTAGENESIS OF HIS-160</scope>
    <source>
        <strain>ATCC 35091 / DSM 1616 / JCM 8930 / NBRC 15331 / P1</strain>
        <strain>ATCC 35092 / DSM 1617 / JCM 11322 / P2</strain>
    </source>
</reference>
<gene>
    <name type="primary">csa2b</name>
    <name type="synonym">cas7b</name>
    <name type="ordered locus">SSO1442</name>
</gene>
<accession>Q97Y91</accession>
<feature type="chain" id="PRO_0000417885" description="CRISPR-associated aCascade subunit Cas7/Csa2 2">
    <location>
        <begin position="1"/>
        <end position="321"/>
    </location>
</feature>
<feature type="mutagenesis site" description="Significantly reduced affinity for crRNA." evidence="2">
    <original>H</original>
    <variation>A</variation>
    <location>
        <position position="160"/>
    </location>
</feature>
<feature type="strand" evidence="4">
    <location>
        <begin position="1"/>
        <end position="11"/>
    </location>
</feature>
<feature type="helix" evidence="4">
    <location>
        <begin position="12"/>
        <end position="15"/>
    </location>
</feature>
<feature type="strand" evidence="4">
    <location>
        <begin position="24"/>
        <end position="26"/>
    </location>
</feature>
<feature type="strand" evidence="4">
    <location>
        <begin position="28"/>
        <end position="36"/>
    </location>
</feature>
<feature type="strand" evidence="4">
    <location>
        <begin position="39"/>
        <end position="48"/>
    </location>
</feature>
<feature type="helix" evidence="4">
    <location>
        <begin position="50"/>
        <end position="68"/>
    </location>
</feature>
<feature type="helix" evidence="4">
    <location>
        <begin position="76"/>
        <end position="78"/>
    </location>
</feature>
<feature type="helix" evidence="4">
    <location>
        <begin position="87"/>
        <end position="93"/>
    </location>
</feature>
<feature type="helix" evidence="4">
    <location>
        <begin position="101"/>
        <end position="103"/>
    </location>
</feature>
<feature type="helix" evidence="4">
    <location>
        <begin position="104"/>
        <end position="114"/>
    </location>
</feature>
<feature type="helix" evidence="4">
    <location>
        <begin position="116"/>
        <end position="120"/>
    </location>
</feature>
<feature type="strand" evidence="4">
    <location>
        <begin position="123"/>
        <end position="125"/>
    </location>
</feature>
<feature type="strand" evidence="4">
    <location>
        <begin position="127"/>
        <end position="129"/>
    </location>
</feature>
<feature type="strand" evidence="4">
    <location>
        <begin position="131"/>
        <end position="133"/>
    </location>
</feature>
<feature type="strand" evidence="4">
    <location>
        <begin position="136"/>
        <end position="140"/>
    </location>
</feature>
<feature type="strand" evidence="4">
    <location>
        <begin position="142"/>
        <end position="144"/>
    </location>
</feature>
<feature type="helix" evidence="4">
    <location>
        <begin position="151"/>
        <end position="158"/>
    </location>
</feature>
<feature type="strand" evidence="4">
    <location>
        <begin position="180"/>
        <end position="190"/>
    </location>
</feature>
<feature type="helix" evidence="4">
    <location>
        <begin position="192"/>
        <end position="194"/>
    </location>
</feature>
<feature type="helix" evidence="4">
    <location>
        <begin position="207"/>
        <end position="224"/>
    </location>
</feature>
<feature type="helix" evidence="4">
    <location>
        <begin position="226"/>
        <end position="230"/>
    </location>
</feature>
<feature type="strand" evidence="4">
    <location>
        <begin position="245"/>
        <end position="257"/>
    </location>
</feature>
<feature type="strand" evidence="4">
    <location>
        <begin position="264"/>
        <end position="266"/>
    </location>
</feature>
<feature type="helix" evidence="4">
    <location>
        <begin position="269"/>
        <end position="283"/>
    </location>
</feature>
<feature type="strand" evidence="4">
    <location>
        <begin position="289"/>
        <end position="297"/>
    </location>
</feature>
<feature type="helix" evidence="4">
    <location>
        <begin position="311"/>
        <end position="319"/>
    </location>
</feature>
<name>CSA2B_SACS2</name>
<comment type="function">
    <text evidence="1">CRISPR (clustered regularly interspaced short palindromic repeat) is an adaptive immune system that provides protection against mobile genetic elements (viruses, transposable elements and conjugative plasmids). CRISPR clusters contain spacers, sequences complementary to antecedent mobile elements, and target invading nucleic acids. CRISPR clusters are transcribed and processed into CRISPR RNA (crRNA) (By similarity).</text>
</comment>
<comment type="subunit">
    <text evidence="2">Part of the aCascade ribonucleoprotein complex, minimally composed of Csa2 and Cas5a, which binds crRNA. Other possible components of aCascade in strain P1 are Cas6b (SSO1437) and Csa5 (SSO1443), while SSO1399, Cas5b (SSO1400) and SSO1401 have sometimes been seen weakly associated. Csa2 is probably the major RNA-binding subunit. The Csa2-Cas5a-crRNA complex also binds target DNA homologous to crRNA, probably forming an R-loop. Purified aCascade forms a filament about 6 nm in width.</text>
</comment>
<comment type="miscellaneous">
    <text>Crystallography and cloning were done with strain P2, while interaction experiments were done with genes cloned from strain P2 but over-expressed in P1. The aCascade complex was purified from strain P1.</text>
</comment>
<comment type="similarity">
    <text evidence="3">Belongs to the CRISPR-associated protein Cas7/Cst2/DevR family. Subtype I-a/Apern subfamily.</text>
</comment>
<protein>
    <recommendedName>
        <fullName>CRISPR-associated aCascade subunit Cas7/Csa2 2</fullName>
    </recommendedName>
    <alternativeName>
        <fullName>CRISPR-associated aCascade subunit Cas7/Csa2, subtype I-A/Apern 2</fullName>
    </alternativeName>
</protein>
<sequence length="321" mass="35265">MISGSVRFLVNLESLNGVESIGNLTKHRTAPVVLKTSTGYLVRYVPVISGEALAHAYQASLVDIAKKEGLPVGSLSSQYEFIKFSTDEALKIEGIKEPKDYNDARRFEVEVMLKDVIADVGGFMYAGGAPVRRTSRIKLGYMIPALRGDEIPAQLEAQFHVRFSNKPVSGSQAIFNVEVSSALYTFSFELDEDLIAVPSTFGEKVKGEEELERQKAKRVKSAIKALYSLLSGNFGGKRSRFLPSMKLMSLVVTKTDFPFMPEPAHDDDYIKTTIMRLGKAKGVLNGNLAKAYVINNEGIEVGEGVTVLSTVEDLVVKLEEE</sequence>
<proteinExistence type="evidence at protein level"/>
<keyword id="KW-0002">3D-structure</keyword>
<keyword id="KW-0051">Antiviral defense</keyword>
<keyword id="KW-1185">Reference proteome</keyword>
<keyword id="KW-0694">RNA-binding</keyword>
<organism>
    <name type="scientific">Saccharolobus solfataricus (strain ATCC 35092 / DSM 1617 / JCM 11322 / P2)</name>
    <name type="common">Sulfolobus solfataricus</name>
    <dbReference type="NCBI Taxonomy" id="273057"/>
    <lineage>
        <taxon>Archaea</taxon>
        <taxon>Thermoproteota</taxon>
        <taxon>Thermoprotei</taxon>
        <taxon>Sulfolobales</taxon>
        <taxon>Sulfolobaceae</taxon>
        <taxon>Saccharolobus</taxon>
    </lineage>
</organism>
<dbReference type="EMBL" id="AE006641">
    <property type="protein sequence ID" value="AAK41675.1"/>
    <property type="molecule type" value="Genomic_DNA"/>
</dbReference>
<dbReference type="PIR" id="D90302">
    <property type="entry name" value="D90302"/>
</dbReference>
<dbReference type="RefSeq" id="WP_010923407.1">
    <property type="nucleotide sequence ID" value="NC_002754.1"/>
</dbReference>
<dbReference type="PDB" id="3PS0">
    <property type="method" value="X-ray"/>
    <property type="resolution" value="2.00 A"/>
    <property type="chains" value="A/B/C/D=1-321"/>
</dbReference>
<dbReference type="PDBsum" id="3PS0"/>
<dbReference type="SMR" id="Q97Y91"/>
<dbReference type="STRING" id="273057.SSO1442"/>
<dbReference type="PaxDb" id="273057-SSO1442"/>
<dbReference type="EnsemblBacteria" id="AAK41675">
    <property type="protein sequence ID" value="AAK41675"/>
    <property type="gene ID" value="SSO1442"/>
</dbReference>
<dbReference type="GeneID" id="1454454"/>
<dbReference type="KEGG" id="sso:SSO1442"/>
<dbReference type="PATRIC" id="fig|273057.12.peg.1471"/>
<dbReference type="eggNOG" id="arCOG03617">
    <property type="taxonomic scope" value="Archaea"/>
</dbReference>
<dbReference type="HOGENOM" id="CLU_054331_0_0_2"/>
<dbReference type="InParanoid" id="Q97Y91"/>
<dbReference type="PhylomeDB" id="Q97Y91"/>
<dbReference type="EvolutionaryTrace" id="Q97Y91"/>
<dbReference type="Proteomes" id="UP000001974">
    <property type="component" value="Chromosome"/>
</dbReference>
<dbReference type="GO" id="GO:0003723">
    <property type="term" value="F:RNA binding"/>
    <property type="evidence" value="ECO:0007669"/>
    <property type="project" value="UniProtKB-KW"/>
</dbReference>
<dbReference type="GO" id="GO:0051607">
    <property type="term" value="P:defense response to virus"/>
    <property type="evidence" value="ECO:0007669"/>
    <property type="project" value="UniProtKB-KW"/>
</dbReference>
<dbReference type="CDD" id="cd09685">
    <property type="entry name" value="Cas7_I-A"/>
    <property type="match status" value="1"/>
</dbReference>
<dbReference type="InterPro" id="IPR002764">
    <property type="entry name" value="Cas7/Cst2/DevR_sub_I-a/Apern"/>
</dbReference>
<dbReference type="InterPro" id="IPR010154">
    <property type="entry name" value="CRISPR-assoc_Cas7/Cst2/DevR"/>
</dbReference>
<dbReference type="InterPro" id="IPR052681">
    <property type="entry name" value="CRISPR-Cas7/Cst2/DevR"/>
</dbReference>
<dbReference type="NCBIfam" id="TIGR01875">
    <property type="entry name" value="cas_MJ0381"/>
    <property type="match status" value="1"/>
</dbReference>
<dbReference type="NCBIfam" id="TIGR02583">
    <property type="entry name" value="DevR_archaea"/>
    <property type="match status" value="1"/>
</dbReference>
<dbReference type="PANTHER" id="PTHR37459">
    <property type="match status" value="1"/>
</dbReference>
<dbReference type="PANTHER" id="PTHR37459:SF1">
    <property type="entry name" value="CRISPR-ASSOCIATED PROTEIN CAS7_CST2_DEVR"/>
    <property type="match status" value="1"/>
</dbReference>
<dbReference type="Pfam" id="PF01905">
    <property type="entry name" value="DevR"/>
    <property type="match status" value="1"/>
</dbReference>
<evidence type="ECO:0000250" key="1"/>
<evidence type="ECO:0000269" key="2">
    <source>
    </source>
</evidence>
<evidence type="ECO:0000305" key="3"/>
<evidence type="ECO:0007829" key="4">
    <source>
        <dbReference type="PDB" id="3PS0"/>
    </source>
</evidence>